<comment type="function">
    <text evidence="1">Peptide chain release factor 2 directs the termination of translation in response to the peptide chain termination codons UGA and UAA.</text>
</comment>
<comment type="subcellular location">
    <subcellularLocation>
        <location evidence="1">Cytoplasm</location>
    </subcellularLocation>
</comment>
<comment type="PTM">
    <text evidence="1">Methylated by PrmC. Methylation increases the termination efficiency of RF2.</text>
</comment>
<comment type="similarity">
    <text evidence="1">Belongs to the prokaryotic/mitochondrial release factor family.</text>
</comment>
<name>RF2_MYCGI</name>
<accession>A4TDE5</accession>
<reference key="1">
    <citation type="submission" date="2007-04" db="EMBL/GenBank/DDBJ databases">
        <title>Complete sequence of chromosome of Mycobacterium gilvum PYR-GCK.</title>
        <authorList>
            <consortium name="US DOE Joint Genome Institute"/>
            <person name="Copeland A."/>
            <person name="Lucas S."/>
            <person name="Lapidus A."/>
            <person name="Barry K."/>
            <person name="Detter J.C."/>
            <person name="Glavina del Rio T."/>
            <person name="Hammon N."/>
            <person name="Israni S."/>
            <person name="Dalin E."/>
            <person name="Tice H."/>
            <person name="Pitluck S."/>
            <person name="Chain P."/>
            <person name="Malfatti S."/>
            <person name="Shin M."/>
            <person name="Vergez L."/>
            <person name="Schmutz J."/>
            <person name="Larimer F."/>
            <person name="Land M."/>
            <person name="Hauser L."/>
            <person name="Kyrpides N."/>
            <person name="Mikhailova N."/>
            <person name="Miller C."/>
            <person name="Richardson P."/>
        </authorList>
    </citation>
    <scope>NUCLEOTIDE SEQUENCE [LARGE SCALE GENOMIC DNA]</scope>
    <source>
        <strain>PYR-GCK</strain>
    </source>
</reference>
<keyword id="KW-0963">Cytoplasm</keyword>
<keyword id="KW-0488">Methylation</keyword>
<keyword id="KW-0648">Protein biosynthesis</keyword>
<organism>
    <name type="scientific">Mycolicibacterium gilvum (strain PYR-GCK)</name>
    <name type="common">Mycobacterium gilvum (strain PYR-GCK)</name>
    <dbReference type="NCBI Taxonomy" id="350054"/>
    <lineage>
        <taxon>Bacteria</taxon>
        <taxon>Bacillati</taxon>
        <taxon>Actinomycetota</taxon>
        <taxon>Actinomycetes</taxon>
        <taxon>Mycobacteriales</taxon>
        <taxon>Mycobacteriaceae</taxon>
        <taxon>Mycolicibacterium</taxon>
    </lineage>
</organism>
<dbReference type="EMBL" id="CP000656">
    <property type="protein sequence ID" value="ABP46920.1"/>
    <property type="molecule type" value="Genomic_DNA"/>
</dbReference>
<dbReference type="SMR" id="A4TDE5"/>
<dbReference type="STRING" id="350054.Mflv_4451"/>
<dbReference type="KEGG" id="mgi:Mflv_4451"/>
<dbReference type="eggNOG" id="COG0216">
    <property type="taxonomic scope" value="Bacteria"/>
</dbReference>
<dbReference type="HOGENOM" id="CLU_036856_6_0_11"/>
<dbReference type="OrthoDB" id="9806673at2"/>
<dbReference type="GO" id="GO:0005737">
    <property type="term" value="C:cytoplasm"/>
    <property type="evidence" value="ECO:0007669"/>
    <property type="project" value="UniProtKB-SubCell"/>
</dbReference>
<dbReference type="GO" id="GO:0016149">
    <property type="term" value="F:translation release factor activity, codon specific"/>
    <property type="evidence" value="ECO:0007669"/>
    <property type="project" value="UniProtKB-UniRule"/>
</dbReference>
<dbReference type="FunFam" id="3.30.160.20:FF:000010">
    <property type="entry name" value="Peptide chain release factor 2"/>
    <property type="match status" value="1"/>
</dbReference>
<dbReference type="Gene3D" id="3.30.160.20">
    <property type="match status" value="1"/>
</dbReference>
<dbReference type="Gene3D" id="3.30.70.1660">
    <property type="match status" value="1"/>
</dbReference>
<dbReference type="Gene3D" id="1.20.58.410">
    <property type="entry name" value="Release factor"/>
    <property type="match status" value="1"/>
</dbReference>
<dbReference type="HAMAP" id="MF_00094">
    <property type="entry name" value="Rel_fac_2"/>
    <property type="match status" value="1"/>
</dbReference>
<dbReference type="InterPro" id="IPR005139">
    <property type="entry name" value="PCRF"/>
</dbReference>
<dbReference type="InterPro" id="IPR000352">
    <property type="entry name" value="Pep_chain_release_fac_I"/>
</dbReference>
<dbReference type="InterPro" id="IPR045853">
    <property type="entry name" value="Pep_chain_release_fac_I_sf"/>
</dbReference>
<dbReference type="InterPro" id="IPR004374">
    <property type="entry name" value="PrfB"/>
</dbReference>
<dbReference type="NCBIfam" id="TIGR00020">
    <property type="entry name" value="prfB"/>
    <property type="match status" value="1"/>
</dbReference>
<dbReference type="PANTHER" id="PTHR43116:SF3">
    <property type="entry name" value="CLASS I PEPTIDE CHAIN RELEASE FACTOR"/>
    <property type="match status" value="1"/>
</dbReference>
<dbReference type="PANTHER" id="PTHR43116">
    <property type="entry name" value="PEPTIDE CHAIN RELEASE FACTOR 2"/>
    <property type="match status" value="1"/>
</dbReference>
<dbReference type="Pfam" id="PF03462">
    <property type="entry name" value="PCRF"/>
    <property type="match status" value="1"/>
</dbReference>
<dbReference type="Pfam" id="PF00472">
    <property type="entry name" value="RF-1"/>
    <property type="match status" value="1"/>
</dbReference>
<dbReference type="SMART" id="SM00937">
    <property type="entry name" value="PCRF"/>
    <property type="match status" value="1"/>
</dbReference>
<dbReference type="SUPFAM" id="SSF75620">
    <property type="entry name" value="Release factor"/>
    <property type="match status" value="1"/>
</dbReference>
<dbReference type="PROSITE" id="PS00745">
    <property type="entry name" value="RF_PROK_I"/>
    <property type="match status" value="1"/>
</dbReference>
<protein>
    <recommendedName>
        <fullName evidence="1">Peptide chain release factor 2</fullName>
        <shortName evidence="1">RF-2</shortName>
    </recommendedName>
</protein>
<gene>
    <name evidence="1" type="primary">prfB</name>
    <name type="ordered locus">Mflv_4451</name>
</gene>
<proteinExistence type="inferred from homology"/>
<sequence length="372" mass="41471">MDPDRQSDIAALDTTLTTVERVVNVDGLRGRIQQLESDASDPKLWDDQARAQKVTSDLSHAQNELRRVEELRSRLDDLPVLYELAAEEEGAGSSEAFAEADAELAKLREDIAGMEVRTLLSGEYDEREALVNIRSGAGGVDAADWAEMLMRMYIRWAEQHDYPVEVFDTSYAEEAGIKSATFAVHAPYAYGNLSVEQGTHRLVRISPFDNQSRRQTSFADVEVLPVVETTDHIDIPEGDVRVDVYRSSGPGGQSVNTTDSAVRLTHIPTGIVVTCQNEKSQLQNKVSAMRVLQAKLLERKRLEERAEMDALKGDGGSSWGNQMRSYVLHPYQMVKDLRTEYEVGNPAAVLDGDIDGFLEAGIRWRNQKVDDE</sequence>
<evidence type="ECO:0000255" key="1">
    <source>
        <dbReference type="HAMAP-Rule" id="MF_00094"/>
    </source>
</evidence>
<feature type="chain" id="PRO_1000075526" description="Peptide chain release factor 2">
    <location>
        <begin position="1"/>
        <end position="372"/>
    </location>
</feature>
<feature type="modified residue" description="N5-methylglutamine" evidence="1">
    <location>
        <position position="253"/>
    </location>
</feature>